<accession>B1WUS5</accession>
<gene>
    <name evidence="1" type="primary">ndhB</name>
    <name type="ordered locus">cce_1176</name>
</gene>
<keyword id="KW-0472">Membrane</keyword>
<keyword id="KW-0520">NAD</keyword>
<keyword id="KW-0521">NADP</keyword>
<keyword id="KW-0618">Plastoquinone</keyword>
<keyword id="KW-0874">Quinone</keyword>
<keyword id="KW-1185">Reference proteome</keyword>
<keyword id="KW-0793">Thylakoid</keyword>
<keyword id="KW-1278">Translocase</keyword>
<keyword id="KW-0812">Transmembrane</keyword>
<keyword id="KW-1133">Transmembrane helix</keyword>
<keyword id="KW-0813">Transport</keyword>
<evidence type="ECO:0000255" key="1">
    <source>
        <dbReference type="HAMAP-Rule" id="MF_00445"/>
    </source>
</evidence>
<proteinExistence type="inferred from homology"/>
<protein>
    <recommendedName>
        <fullName evidence="1">NAD(P)H-quinone oxidoreductase subunit 2</fullName>
        <ecNumber evidence="1">7.1.1.-</ecNumber>
    </recommendedName>
    <alternativeName>
        <fullName evidence="1">NAD(P)H dehydrogenase subunit 2</fullName>
    </alternativeName>
    <alternativeName>
        <fullName evidence="1">NADH-plastoquinone oxidoreductase subunit 2</fullName>
    </alternativeName>
    <alternativeName>
        <fullName evidence="1">NDH-1, subunit 2</fullName>
    </alternativeName>
</protein>
<dbReference type="EC" id="7.1.1.-" evidence="1"/>
<dbReference type="EMBL" id="CP000806">
    <property type="protein sequence ID" value="ACB50526.1"/>
    <property type="molecule type" value="Genomic_DNA"/>
</dbReference>
<dbReference type="RefSeq" id="WP_009544006.1">
    <property type="nucleotide sequence ID" value="NC_010546.1"/>
</dbReference>
<dbReference type="SMR" id="B1WUS5"/>
<dbReference type="STRING" id="43989.cce_1176"/>
<dbReference type="KEGG" id="cyt:cce_1176"/>
<dbReference type="eggNOG" id="COG1007">
    <property type="taxonomic scope" value="Bacteria"/>
</dbReference>
<dbReference type="HOGENOM" id="CLU_007100_1_5_3"/>
<dbReference type="OrthoDB" id="9811718at2"/>
<dbReference type="Proteomes" id="UP000001203">
    <property type="component" value="Chromosome circular"/>
</dbReference>
<dbReference type="GO" id="GO:0031676">
    <property type="term" value="C:plasma membrane-derived thylakoid membrane"/>
    <property type="evidence" value="ECO:0007669"/>
    <property type="project" value="UniProtKB-SubCell"/>
</dbReference>
<dbReference type="GO" id="GO:0008137">
    <property type="term" value="F:NADH dehydrogenase (ubiquinone) activity"/>
    <property type="evidence" value="ECO:0007669"/>
    <property type="project" value="InterPro"/>
</dbReference>
<dbReference type="GO" id="GO:0048038">
    <property type="term" value="F:quinone binding"/>
    <property type="evidence" value="ECO:0007669"/>
    <property type="project" value="UniProtKB-KW"/>
</dbReference>
<dbReference type="GO" id="GO:0042773">
    <property type="term" value="P:ATP synthesis coupled electron transport"/>
    <property type="evidence" value="ECO:0007669"/>
    <property type="project" value="InterPro"/>
</dbReference>
<dbReference type="GO" id="GO:0019684">
    <property type="term" value="P:photosynthesis, light reaction"/>
    <property type="evidence" value="ECO:0007669"/>
    <property type="project" value="UniProtKB-UniRule"/>
</dbReference>
<dbReference type="HAMAP" id="MF_00445">
    <property type="entry name" value="NDH1_NuoN_1"/>
    <property type="match status" value="1"/>
</dbReference>
<dbReference type="InterPro" id="IPR010096">
    <property type="entry name" value="NADH-Q_OxRdtase_suN/2"/>
</dbReference>
<dbReference type="InterPro" id="IPR001750">
    <property type="entry name" value="ND/Mrp_TM"/>
</dbReference>
<dbReference type="InterPro" id="IPR045693">
    <property type="entry name" value="Ndh2_N"/>
</dbReference>
<dbReference type="NCBIfam" id="TIGR01770">
    <property type="entry name" value="NDH_I_N"/>
    <property type="match status" value="1"/>
</dbReference>
<dbReference type="NCBIfam" id="NF002701">
    <property type="entry name" value="PRK02504.1"/>
    <property type="match status" value="1"/>
</dbReference>
<dbReference type="PANTHER" id="PTHR22773">
    <property type="entry name" value="NADH DEHYDROGENASE"/>
    <property type="match status" value="1"/>
</dbReference>
<dbReference type="Pfam" id="PF19530">
    <property type="entry name" value="Ndh2_N"/>
    <property type="match status" value="1"/>
</dbReference>
<dbReference type="Pfam" id="PF00361">
    <property type="entry name" value="Proton_antipo_M"/>
    <property type="match status" value="1"/>
</dbReference>
<dbReference type="PRINTS" id="PR01434">
    <property type="entry name" value="NADHDHGNASE5"/>
</dbReference>
<name>NU2C_CROS5</name>
<feature type="chain" id="PRO_1000192412" description="NAD(P)H-quinone oxidoreductase subunit 2">
    <location>
        <begin position="1"/>
        <end position="521"/>
    </location>
</feature>
<feature type="transmembrane region" description="Helical" evidence="1">
    <location>
        <begin position="16"/>
        <end position="36"/>
    </location>
</feature>
<feature type="transmembrane region" description="Helical" evidence="1">
    <location>
        <begin position="43"/>
        <end position="63"/>
    </location>
</feature>
<feature type="transmembrane region" description="Helical" evidence="1">
    <location>
        <begin position="80"/>
        <end position="100"/>
    </location>
</feature>
<feature type="transmembrane region" description="Helical" evidence="1">
    <location>
        <begin position="110"/>
        <end position="130"/>
    </location>
</feature>
<feature type="transmembrane region" description="Helical" evidence="1">
    <location>
        <begin position="133"/>
        <end position="153"/>
    </location>
</feature>
<feature type="transmembrane region" description="Helical" evidence="1">
    <location>
        <begin position="168"/>
        <end position="188"/>
    </location>
</feature>
<feature type="transmembrane region" description="Helical" evidence="1">
    <location>
        <begin position="211"/>
        <end position="231"/>
    </location>
</feature>
<feature type="transmembrane region" description="Helical" evidence="1">
    <location>
        <begin position="245"/>
        <end position="265"/>
    </location>
</feature>
<feature type="transmembrane region" description="Helical" evidence="1">
    <location>
        <begin position="279"/>
        <end position="299"/>
    </location>
</feature>
<feature type="transmembrane region" description="Helical" evidence="1">
    <location>
        <begin position="307"/>
        <end position="327"/>
    </location>
</feature>
<feature type="transmembrane region" description="Helical" evidence="1">
    <location>
        <begin position="335"/>
        <end position="355"/>
    </location>
</feature>
<feature type="transmembrane region" description="Helical" evidence="1">
    <location>
        <begin position="379"/>
        <end position="399"/>
    </location>
</feature>
<feature type="transmembrane region" description="Helical" evidence="1">
    <location>
        <begin position="401"/>
        <end position="421"/>
    </location>
</feature>
<feature type="transmembrane region" description="Helical" evidence="1">
    <location>
        <begin position="467"/>
        <end position="487"/>
    </location>
</feature>
<sequence>MDFSSNIASQLNAGTILPEGIVIITLMVVLIGDLIGGRNARMWLPYGAIAGLLAALFALYTAWDNPSTIGFLGAFNGDNLSIVFRGIIALSTIVTLLMSIRYVEQTGTSLAEFIGIMLTATLGGMFLSGANELVMIFISLEMLSISSYLMTGYMKRDPRSNEAALKYLLIGASSSAIFLYGSSLLYGLSGGETTLDTISAKILASDGSSSLGLAIALVFVIAGIAFKISAVPFHQWTPDVYEGSPTPVVAFLSVGSKAAGFALAIRLLVTAFSSIVDEWHLIFTALAILSMVLGNVVALAQTSMKRMLAYSSIGQAGFVMIGLTAGTDAGYSSMVFYLLVYLFMNLGAFSGVILFSLRTGTDQISEYAGLYQKDPLLTLGLSLCLLSLGGIPPLAGFFGKIYLFWAGWQAELYGLVLLALVTSVVSIYYYIRVVKMMVVKEPHEMSDSVKNYPEIRWNLEGMRPLQVGLVLSVIATSLAGILSNPLFSLANDSVTSTPILQSTIVNTRISQGEIPSSTIDP</sequence>
<organism>
    <name type="scientific">Crocosphaera subtropica (strain ATCC 51142 / BH68)</name>
    <name type="common">Cyanothece sp. (strain ATCC 51142)</name>
    <dbReference type="NCBI Taxonomy" id="43989"/>
    <lineage>
        <taxon>Bacteria</taxon>
        <taxon>Bacillati</taxon>
        <taxon>Cyanobacteriota</taxon>
        <taxon>Cyanophyceae</taxon>
        <taxon>Oscillatoriophycideae</taxon>
        <taxon>Chroococcales</taxon>
        <taxon>Aphanothecaceae</taxon>
        <taxon>Crocosphaera</taxon>
        <taxon>Crocosphaera subtropica</taxon>
    </lineage>
</organism>
<comment type="function">
    <text evidence="1">NDH-1 shuttles electrons from an unknown electron donor, via FMN and iron-sulfur (Fe-S) centers, to quinones in the respiratory and/or the photosynthetic chain. The immediate electron acceptor for the enzyme in this species is believed to be plastoquinone. Couples the redox reaction to proton translocation, and thus conserves the redox energy in a proton gradient. Cyanobacterial NDH-1 also plays a role in inorganic carbon-concentration.</text>
</comment>
<comment type="catalytic activity">
    <reaction evidence="1">
        <text>a plastoquinone + NADH + (n+1) H(+)(in) = a plastoquinol + NAD(+) + n H(+)(out)</text>
        <dbReference type="Rhea" id="RHEA:42608"/>
        <dbReference type="Rhea" id="RHEA-COMP:9561"/>
        <dbReference type="Rhea" id="RHEA-COMP:9562"/>
        <dbReference type="ChEBI" id="CHEBI:15378"/>
        <dbReference type="ChEBI" id="CHEBI:17757"/>
        <dbReference type="ChEBI" id="CHEBI:57540"/>
        <dbReference type="ChEBI" id="CHEBI:57945"/>
        <dbReference type="ChEBI" id="CHEBI:62192"/>
    </reaction>
</comment>
<comment type="catalytic activity">
    <reaction evidence="1">
        <text>a plastoquinone + NADPH + (n+1) H(+)(in) = a plastoquinol + NADP(+) + n H(+)(out)</text>
        <dbReference type="Rhea" id="RHEA:42612"/>
        <dbReference type="Rhea" id="RHEA-COMP:9561"/>
        <dbReference type="Rhea" id="RHEA-COMP:9562"/>
        <dbReference type="ChEBI" id="CHEBI:15378"/>
        <dbReference type="ChEBI" id="CHEBI:17757"/>
        <dbReference type="ChEBI" id="CHEBI:57783"/>
        <dbReference type="ChEBI" id="CHEBI:58349"/>
        <dbReference type="ChEBI" id="CHEBI:62192"/>
    </reaction>
</comment>
<comment type="subunit">
    <text evidence="1">NDH-1 can be composed of about 15 different subunits; different subcomplexes with different compositions have been identified which probably have different functions.</text>
</comment>
<comment type="subcellular location">
    <subcellularLocation>
        <location evidence="1">Cellular thylakoid membrane</location>
        <topology evidence="1">Multi-pass membrane protein</topology>
    </subcellularLocation>
</comment>
<comment type="similarity">
    <text evidence="1">Belongs to the complex I subunit 2 family.</text>
</comment>
<reference key="1">
    <citation type="journal article" date="2008" name="Proc. Natl. Acad. Sci. U.S.A.">
        <title>The genome of Cyanothece 51142, a unicellular diazotrophic cyanobacterium important in the marine nitrogen cycle.</title>
        <authorList>
            <person name="Welsh E.A."/>
            <person name="Liberton M."/>
            <person name="Stoeckel J."/>
            <person name="Loh T."/>
            <person name="Elvitigala T."/>
            <person name="Wang C."/>
            <person name="Wollam A."/>
            <person name="Fulton R.S."/>
            <person name="Clifton S.W."/>
            <person name="Jacobs J.M."/>
            <person name="Aurora R."/>
            <person name="Ghosh B.K."/>
            <person name="Sherman L.A."/>
            <person name="Smith R.D."/>
            <person name="Wilson R.K."/>
            <person name="Pakrasi H.B."/>
        </authorList>
    </citation>
    <scope>NUCLEOTIDE SEQUENCE [LARGE SCALE GENOMIC DNA]</scope>
    <source>
        <strain>ATCC 51142 / BH68</strain>
    </source>
</reference>